<name>NTPPB_VIBVU</name>
<gene>
    <name type="ordered locus">VV1_3015</name>
</gene>
<feature type="chain" id="PRO_0000123073" description="7-methyl-GTP pyrophosphatase">
    <location>
        <begin position="1"/>
        <end position="194"/>
    </location>
</feature>
<feature type="active site" description="Proton acceptor" evidence="1">
    <location>
        <position position="70"/>
    </location>
</feature>
<feature type="site" description="Important for substrate specificity" evidence="1">
    <location>
        <position position="14"/>
    </location>
</feature>
<feature type="site" description="Important for substrate specificity" evidence="1">
    <location>
        <position position="71"/>
    </location>
</feature>
<feature type="site" description="Important for substrate specificity" evidence="1">
    <location>
        <position position="155"/>
    </location>
</feature>
<comment type="function">
    <text evidence="1">Nucleoside triphosphate pyrophosphatase that hydrolyzes 7-methyl-GTP (m(7)GTP). May have a dual role in cell division arrest and in preventing the incorporation of modified nucleotides into cellular nucleic acids.</text>
</comment>
<comment type="catalytic activity">
    <reaction evidence="1">
        <text>N(7)-methyl-GTP + H2O = N(7)-methyl-GMP + diphosphate + H(+)</text>
        <dbReference type="Rhea" id="RHEA:58744"/>
        <dbReference type="ChEBI" id="CHEBI:15377"/>
        <dbReference type="ChEBI" id="CHEBI:15378"/>
        <dbReference type="ChEBI" id="CHEBI:33019"/>
        <dbReference type="ChEBI" id="CHEBI:58285"/>
        <dbReference type="ChEBI" id="CHEBI:87133"/>
    </reaction>
</comment>
<comment type="cofactor">
    <cofactor evidence="1">
        <name>a divalent metal cation</name>
        <dbReference type="ChEBI" id="CHEBI:60240"/>
    </cofactor>
</comment>
<comment type="subcellular location">
    <subcellularLocation>
        <location evidence="1">Cytoplasm</location>
    </subcellularLocation>
</comment>
<comment type="similarity">
    <text evidence="1">Belongs to the Maf family. YceF subfamily.</text>
</comment>
<protein>
    <recommendedName>
        <fullName evidence="1">7-methyl-GTP pyrophosphatase</fullName>
        <shortName evidence="1">m(7)GTP pyrophosphatase</shortName>
        <ecNumber evidence="1">3.6.1.-</ecNumber>
    </recommendedName>
</protein>
<reference key="1">
    <citation type="submission" date="2002-12" db="EMBL/GenBank/DDBJ databases">
        <title>Complete genome sequence of Vibrio vulnificus CMCP6.</title>
        <authorList>
            <person name="Rhee J.H."/>
            <person name="Kim S.Y."/>
            <person name="Chung S.S."/>
            <person name="Kim J.J."/>
            <person name="Moon Y.H."/>
            <person name="Jeong H."/>
            <person name="Choy H.E."/>
        </authorList>
    </citation>
    <scope>NUCLEOTIDE SEQUENCE [LARGE SCALE GENOMIC DNA]</scope>
    <source>
        <strain>CMCP6</strain>
    </source>
</reference>
<accession>Q8D8G2</accession>
<keyword id="KW-0963">Cytoplasm</keyword>
<keyword id="KW-0378">Hydrolase</keyword>
<keyword id="KW-0546">Nucleotide metabolism</keyword>
<sequence>MENYQLVLASTSPFRQQLLEKLAIPFSTLSPNCDETPLEGESPQQLVLRLAESKAQSCQINQPSLVIGSDQVCVINGNIVGKPHNRQNAIAQLTAQSGQSIVFYTGLAVYNSETGETRSCIDEFKVHFRPLTQAQIVRYVDKEQPFYCAGSFKSEGLGIALFEKLEGKDPNTLVGLPLIDLIDLLAQQGMQVLG</sequence>
<dbReference type="EC" id="3.6.1.-" evidence="1"/>
<dbReference type="EMBL" id="AE016795">
    <property type="protein sequence ID" value="AAO11342.1"/>
    <property type="molecule type" value="Genomic_DNA"/>
</dbReference>
<dbReference type="RefSeq" id="WP_011080825.1">
    <property type="nucleotide sequence ID" value="NC_004459.3"/>
</dbReference>
<dbReference type="SMR" id="Q8D8G2"/>
<dbReference type="KEGG" id="vvu:VV1_3015"/>
<dbReference type="HOGENOM" id="CLU_040416_1_0_6"/>
<dbReference type="Proteomes" id="UP000002275">
    <property type="component" value="Chromosome 1"/>
</dbReference>
<dbReference type="GO" id="GO:0005737">
    <property type="term" value="C:cytoplasm"/>
    <property type="evidence" value="ECO:0007669"/>
    <property type="project" value="UniProtKB-SubCell"/>
</dbReference>
<dbReference type="GO" id="GO:0047429">
    <property type="term" value="F:nucleoside triphosphate diphosphatase activity"/>
    <property type="evidence" value="ECO:0007669"/>
    <property type="project" value="InterPro"/>
</dbReference>
<dbReference type="GO" id="GO:0009117">
    <property type="term" value="P:nucleotide metabolic process"/>
    <property type="evidence" value="ECO:0007669"/>
    <property type="project" value="UniProtKB-KW"/>
</dbReference>
<dbReference type="CDD" id="cd00555">
    <property type="entry name" value="Maf"/>
    <property type="match status" value="1"/>
</dbReference>
<dbReference type="FunFam" id="3.90.950.10:FF:000005">
    <property type="entry name" value="7-methyl-GTP pyrophosphatase"/>
    <property type="match status" value="1"/>
</dbReference>
<dbReference type="Gene3D" id="3.90.950.10">
    <property type="match status" value="1"/>
</dbReference>
<dbReference type="HAMAP" id="MF_00528">
    <property type="entry name" value="Maf"/>
    <property type="match status" value="1"/>
</dbReference>
<dbReference type="InterPro" id="IPR029001">
    <property type="entry name" value="ITPase-like_fam"/>
</dbReference>
<dbReference type="InterPro" id="IPR003697">
    <property type="entry name" value="Maf-like"/>
</dbReference>
<dbReference type="NCBIfam" id="TIGR00172">
    <property type="entry name" value="maf"/>
    <property type="match status" value="1"/>
</dbReference>
<dbReference type="PANTHER" id="PTHR43213:SF10">
    <property type="entry name" value="7-METHYL-GTP PYROPHOSPHATASE"/>
    <property type="match status" value="1"/>
</dbReference>
<dbReference type="PANTHER" id="PTHR43213">
    <property type="entry name" value="BIFUNCTIONAL DTTP/UTP PYROPHOSPHATASE/METHYLTRANSFERASE PROTEIN-RELATED"/>
    <property type="match status" value="1"/>
</dbReference>
<dbReference type="Pfam" id="PF02545">
    <property type="entry name" value="Maf"/>
    <property type="match status" value="1"/>
</dbReference>
<dbReference type="PIRSF" id="PIRSF006305">
    <property type="entry name" value="Maf"/>
    <property type="match status" value="1"/>
</dbReference>
<dbReference type="SUPFAM" id="SSF52972">
    <property type="entry name" value="ITPase-like"/>
    <property type="match status" value="1"/>
</dbReference>
<evidence type="ECO:0000255" key="1">
    <source>
        <dbReference type="HAMAP-Rule" id="MF_00528"/>
    </source>
</evidence>
<organism>
    <name type="scientific">Vibrio vulnificus (strain CMCP6)</name>
    <dbReference type="NCBI Taxonomy" id="216895"/>
    <lineage>
        <taxon>Bacteria</taxon>
        <taxon>Pseudomonadati</taxon>
        <taxon>Pseudomonadota</taxon>
        <taxon>Gammaproteobacteria</taxon>
        <taxon>Vibrionales</taxon>
        <taxon>Vibrionaceae</taxon>
        <taxon>Vibrio</taxon>
    </lineage>
</organism>
<proteinExistence type="inferred from homology"/>